<name>MT1_BEAB2</name>
<comment type="function">
    <text evidence="1">Methyltransferase; part of the pathway that mediates the biosynthesis of tenellin-type 2-pyridones, iron-chelating compounds involved in iron stress tolerance, competition with the natural competitor fungus Metarhizium robertsii and insect hosts infection (PubMed:34903054). Methylates pyridovericin-N-O-(beta-D-glucopyranoside) produced by the UDP-glucosyltransferase GT1 to yield pyridovericin-N-O-(4-O-methyl-beta-D-glucopyranoside) (PMGP) (PubMed:34903054). The pathway begins with the assembly of the polyketide-amino acid backbone by the hybrid PKS-NRPS tenS with the help of the enoyl reductase tenC. These enzymes catalyze the synthesis of the pyrrolidine-2-dione intermediates pretellinin A, 11-hydropretellenin A, 12-hydropretellenin A, 13-hydropretellenin A, 14-hydropretellenin A, 12-oxopretellenin A and prototellinin D. The cytochrome P450 monooxygenase tenA then catalyzes an oxidative ring expansion of pretenellin A and 14-hydropretellenin A to form the 2-pyridone core, leading to pretenellin B and pyridovericin, respectively. The cytochrome P450 monooxygenase tenB is then required for the selective N-hydroxylation of the 2-pyridone nitrogen of yield tellinin and 15-hydroxytellenin (15-HT), respectively. The UDP-glucosyltransferase GT1 and the methyltransferase MT1, located outside the tenS gene cluster, contribute to the stepwise glycosylation and methylation of 15-HT to obtain the glycoside pyridovericin-N-O-(4-O-methyl-beta-D-glucopyranoside) (PMGP). Additional related compounds such as 1-O-methyl-15-HT, (8Z)-1-O-methyl-15-HT, and O-methyltenellin A are also produced but the enzymes involved in their biosynthesis have still to be determined (PubMed:34903054).</text>
</comment>
<comment type="pathway">
    <text evidence="1">Secondary metabolite biosynthesis.</text>
</comment>
<comment type="induction">
    <text evidence="1">Expression is positively regulated by the cluster-specific transcription factor tenR and is induced during cocultures with the natural competitor fungus Metarhizium robertsii.</text>
</comment>
<comment type="disruption phenotype">
    <text evidence="1">Impairs the production of detectable pyridovericin-N-O-(4-O-methyl-beta-D-glucopyranoside) (PMGP).</text>
</comment>
<comment type="similarity">
    <text evidence="3">Belongs to the FkbM methyltransferase family.</text>
</comment>
<keyword id="KW-0489">Methyltransferase</keyword>
<keyword id="KW-1185">Reference proteome</keyword>
<keyword id="KW-0808">Transferase</keyword>
<reference key="1">
    <citation type="journal article" date="2012" name="Sci. Rep.">
        <title>Genomic perspectives on the evolution of fungal entomopathogenicity in Beauveria bassiana.</title>
        <authorList>
            <person name="Xiao G."/>
            <person name="Ying S.-H."/>
            <person name="Zheng P."/>
            <person name="Wang Z.-L."/>
            <person name="Zhang S."/>
            <person name="Xie X.-Q."/>
            <person name="Shang Y."/>
            <person name="St Leger R.J."/>
            <person name="Zhao G.-P."/>
            <person name="Wang C."/>
            <person name="Feng M.-G."/>
        </authorList>
    </citation>
    <scope>NUCLEOTIDE SEQUENCE [LARGE SCALE GENOMIC DNA]</scope>
    <source>
        <strain>ARSEF 2860</strain>
    </source>
</reference>
<reference key="2">
    <citation type="journal article" date="2021" name="MBio">
        <title>Inductive production of the iron-chelating 2-pyridones benefits the producing fungus to compete for diverse niches.</title>
        <authorList>
            <person name="Chen B."/>
            <person name="Sun Y."/>
            <person name="Li S."/>
            <person name="Yin Y."/>
            <person name="Wang C."/>
        </authorList>
    </citation>
    <scope>FUNCTION</scope>
    <scope>DISRUPTION PHENOTYPE</scope>
    <scope>INDUCTION</scope>
    <scope>PATHWAY</scope>
</reference>
<proteinExistence type="evidence at transcript level"/>
<protein>
    <recommendedName>
        <fullName evidence="2">Methyltransferase 1</fullName>
        <shortName evidence="2">MT1</shortName>
        <ecNumber evidence="1">2.1.1.-</ecNumber>
    </recommendedName>
    <alternativeName>
        <fullName evidence="2">Sordarin/hypoxysordarin biosynthesis cluster protein D</fullName>
    </alternativeName>
</protein>
<accession>J4KLK4</accession>
<sequence>MALVEKIQLTDDFSVYANPAAKLEVEFIHKEIFIDKCYDVAPFPDDSFIVDAGGNIGMFTLYMKRKYPQSTILAFEPAPATFSTFQRNMELHNVSGVQAHQCGLGREDASLALTFYPQMPGNSTLYAEDKTNQMKSVDQNHPIAKLMQETHEVQVDVKRLSDFLGEVPNLKRVNLLKVDVEGAEMDVLRGLDDEHWDLIDNVVVELCDSKGDFATAKTLLESKGFAVAVERPDWAPPDLKMYMLIAKRN</sequence>
<gene>
    <name type="ORF">BBA_08685</name>
</gene>
<organism>
    <name type="scientific">Beauveria bassiana (strain ARSEF 2860)</name>
    <name type="common">White muscardine disease fungus</name>
    <name type="synonym">Tritirachium shiotae</name>
    <dbReference type="NCBI Taxonomy" id="655819"/>
    <lineage>
        <taxon>Eukaryota</taxon>
        <taxon>Fungi</taxon>
        <taxon>Dikarya</taxon>
        <taxon>Ascomycota</taxon>
        <taxon>Pezizomycotina</taxon>
        <taxon>Sordariomycetes</taxon>
        <taxon>Hypocreomycetidae</taxon>
        <taxon>Hypocreales</taxon>
        <taxon>Cordycipitaceae</taxon>
        <taxon>Beauveria</taxon>
    </lineage>
</organism>
<feature type="chain" id="PRO_0000455691" description="Methyltransferase 1">
    <location>
        <begin position="1"/>
        <end position="249"/>
    </location>
</feature>
<dbReference type="EC" id="2.1.1.-" evidence="1"/>
<dbReference type="EMBL" id="JH725187">
    <property type="protein sequence ID" value="EJP62359.1"/>
    <property type="molecule type" value="Genomic_DNA"/>
</dbReference>
<dbReference type="RefSeq" id="XP_008602004.1">
    <property type="nucleotide sequence ID" value="XM_008603782.1"/>
</dbReference>
<dbReference type="STRING" id="655819.J4KLK4"/>
<dbReference type="GeneID" id="19891697"/>
<dbReference type="HOGENOM" id="CLU_063680_0_0_1"/>
<dbReference type="InParanoid" id="J4KLK4"/>
<dbReference type="OrthoDB" id="759at474943"/>
<dbReference type="Proteomes" id="UP000002762">
    <property type="component" value="Unassembled WGS sequence"/>
</dbReference>
<dbReference type="GO" id="GO:0008168">
    <property type="term" value="F:methyltransferase activity"/>
    <property type="evidence" value="ECO:0007669"/>
    <property type="project" value="UniProtKB-KW"/>
</dbReference>
<dbReference type="GO" id="GO:0032259">
    <property type="term" value="P:methylation"/>
    <property type="evidence" value="ECO:0007669"/>
    <property type="project" value="UniProtKB-KW"/>
</dbReference>
<dbReference type="Gene3D" id="3.40.50.150">
    <property type="entry name" value="Vaccinia Virus protein VP39"/>
    <property type="match status" value="1"/>
</dbReference>
<dbReference type="InterPro" id="IPR006342">
    <property type="entry name" value="FkbM_mtfrase"/>
</dbReference>
<dbReference type="InterPro" id="IPR052514">
    <property type="entry name" value="SAM-dependent_MTase"/>
</dbReference>
<dbReference type="InterPro" id="IPR029063">
    <property type="entry name" value="SAM-dependent_MTases_sf"/>
</dbReference>
<dbReference type="NCBIfam" id="TIGR01444">
    <property type="entry name" value="fkbM_fam"/>
    <property type="match status" value="1"/>
</dbReference>
<dbReference type="PANTHER" id="PTHR34203">
    <property type="entry name" value="METHYLTRANSFERASE, FKBM FAMILY PROTEIN"/>
    <property type="match status" value="1"/>
</dbReference>
<dbReference type="PANTHER" id="PTHR34203:SF15">
    <property type="entry name" value="SLL1173 PROTEIN"/>
    <property type="match status" value="1"/>
</dbReference>
<dbReference type="Pfam" id="PF05050">
    <property type="entry name" value="Methyltransf_21"/>
    <property type="match status" value="1"/>
</dbReference>
<dbReference type="SUPFAM" id="SSF53335">
    <property type="entry name" value="S-adenosyl-L-methionine-dependent methyltransferases"/>
    <property type="match status" value="1"/>
</dbReference>
<evidence type="ECO:0000269" key="1">
    <source>
    </source>
</evidence>
<evidence type="ECO:0000303" key="2">
    <source>
    </source>
</evidence>
<evidence type="ECO:0000305" key="3"/>